<organismHost>
    <name type="scientific">Salmonella typhimurium</name>
    <dbReference type="NCBI Taxonomy" id="90371"/>
</organismHost>
<comment type="function">
    <text evidence="1">Component of the spanin complex that disrupts the host outer membrane and participates in cell lysis during virus exit. The spanin complex conducts the final step in host lysis by disrupting the outer membrane after holin and endolysin action have permeabilized the inner membrane and degraded the host peptidoglycans. Host outer membrane disruption is possibly due to local fusion between the inner and outer membrane performed by the spanin complex (By similarity).</text>
</comment>
<comment type="subunit">
    <text evidence="1">Interacts (via C-terminus) with the spanin inner membrane subunit (via C-terminus). Part of the spanin complex which spans the entire periplasmic space. The spanin complex is composed of spanin inner membrane subunit and spanin outer membrane subunit (By similarity).</text>
</comment>
<comment type="subcellular location">
    <subcellularLocation>
        <location evidence="1">Host cell outer membrane</location>
        <topology evidence="1">Lipid-anchor</topology>
        <orientation evidence="1">Periplasmic side</orientation>
    </subcellularLocation>
</comment>
<comment type="similarity">
    <text evidence="3">Belongs to the caudovirales o-spanin family.</text>
</comment>
<accession>A8CGF6</accession>
<accession>Q8LTE9</accession>
<keyword id="KW-0204">Cytolysis</keyword>
<keyword id="KW-0578">Host cell lysis by virus</keyword>
<keyword id="KW-1033">Host cell outer membrane</keyword>
<keyword id="KW-1043">Host membrane</keyword>
<keyword id="KW-0449">Lipoprotein</keyword>
<keyword id="KW-0472">Membrane</keyword>
<keyword id="KW-1185">Reference proteome</keyword>
<keyword id="KW-0732">Signal</keyword>
<keyword id="KW-1188">Viral release from host cell</keyword>
<gene>
    <name type="primary">Rz1</name>
</gene>
<reference key="1">
    <citation type="journal article" date="1985" name="Virology">
        <title>Phage P22 lysis genes: nucleotide sequences and functional relationships with T4 and lambda genes.</title>
        <authorList>
            <person name="Rennell D."/>
            <person name="Poteete A.R."/>
        </authorList>
    </citation>
    <scope>NUCLEOTIDE SEQUENCE</scope>
</reference>
<reference key="2">
    <citation type="journal article" date="1989" name="Virology">
        <title>Nucleotide sequence of the bacteriophage P22 gene 19 to 3 region: identification of a new gene required for lysis.</title>
        <authorList>
            <person name="Casjens S."/>
            <person name="Eppler K."/>
            <person name="Parr R."/>
            <person name="Poteete A.R."/>
        </authorList>
    </citation>
    <scope>NUCLEOTIDE SEQUENCE [GENOMIC DNA]</scope>
</reference>
<reference key="3">
    <citation type="submission" date="2002-07" db="EMBL/GenBank/DDBJ databases">
        <authorList>
            <person name="Casjens S.R."/>
            <person name="Pedulla M."/>
            <person name="Hendrix R.W."/>
            <person name="Poteete A.R."/>
            <person name="Hatfull G.F."/>
            <person name="Ford M.E."/>
            <person name="Karthikeyan T."/>
            <person name="Houtz J.M."/>
            <person name="Winn D.A."/>
        </authorList>
    </citation>
    <scope>NUCLEOTIDE SEQUENCE [GENOMIC DNA]</scope>
</reference>
<reference key="4">
    <citation type="journal article" date="2003" name="J. Bacteriol.">
        <title>Corrected sequence of the bacteriophage P22 genome.</title>
        <authorList>
            <person name="Pedulla M.L."/>
            <person name="Ford M.E."/>
            <person name="Karthikeyan T."/>
            <person name="Houtz J.M."/>
            <person name="Hendrix R.W."/>
            <person name="Hatfull G.F."/>
            <person name="Poteete A.R."/>
            <person name="Gilcrease E.B."/>
            <person name="Winn-Stapley D.A."/>
            <person name="Casjens S.R."/>
        </authorList>
    </citation>
    <scope>NUCLEOTIDE SEQUENCE [GENOMIC DNA]</scope>
    <source>
        <strain>Wild type</strain>
    </source>
</reference>
<reference key="5">
    <citation type="journal article" date="2008" name="Appl. Environ. Microbiol.">
        <title>Bacteriophage P22 and Staphylococcus aureus attenuation on nonporous fomites as determined by plate assay and quantitative PCR.</title>
        <authorList>
            <person name="Masago Y."/>
            <person name="Shibata T."/>
            <person name="Rose J.B."/>
        </authorList>
    </citation>
    <scope>NUCLEOTIDE SEQUENCE [LARGE SCALE GENOMIC DNA]</scope>
    <source>
        <strain>ATCC 19585-B1</strain>
        <strain>MSU</strain>
    </source>
</reference>
<reference key="6">
    <citation type="submission" date="2008-03" db="EMBL/GenBank/DDBJ databases">
        <title>The molecular identity of contaminant hydrology (20 years later).</title>
        <authorList>
            <person name="Masago Y."/>
            <person name="Fong T.T."/>
            <person name="Rose J.B."/>
        </authorList>
    </citation>
    <scope>NUCLEOTIDE SEQUENCE [GENOMIC DNA]</scope>
    <source>
        <strain>ATCC 19585-B1</strain>
    </source>
</reference>
<evidence type="ECO:0000250" key="1"/>
<evidence type="ECO:0000255" key="2"/>
<evidence type="ECO:0000305" key="3"/>
<sequence length="61" mass="6617">MLTRLSKLSALMFLLGVSACKSPPPVQSQRPEPAAWAMEKAQDLQQMLNSIITVSEVESTG</sequence>
<name>SPAN2_BPP22</name>
<protein>
    <recommendedName>
        <fullName>Probable spanin, outer lipoprotein subunit</fullName>
        <shortName>o-spanin</shortName>
    </recommendedName>
    <alternativeName>
        <fullName>Rz1 protein</fullName>
    </alternativeName>
</protein>
<organism>
    <name type="scientific">Salmonella phage P22</name>
    <name type="common">Bacteriophage P22</name>
    <dbReference type="NCBI Taxonomy" id="10754"/>
    <lineage>
        <taxon>Viruses</taxon>
        <taxon>Duplodnaviria</taxon>
        <taxon>Heunggongvirae</taxon>
        <taxon>Uroviricota</taxon>
        <taxon>Caudoviricetes</taxon>
        <taxon>Lederbergvirus</taxon>
    </lineage>
</organism>
<dbReference type="EMBL" id="BK000583">
    <property type="protein sequence ID" value="DAA01048.1"/>
    <property type="molecule type" value="Genomic_DNA"/>
</dbReference>
<dbReference type="EMBL" id="AF527608">
    <property type="protein sequence ID" value="AAM81450.1"/>
    <property type="molecule type" value="Genomic_DNA"/>
</dbReference>
<dbReference type="EMBL" id="AB362338">
    <property type="protein sequence ID" value="BAF80782.1"/>
    <property type="molecule type" value="Genomic_DNA"/>
</dbReference>
<dbReference type="EMBL" id="AB426868">
    <property type="protein sequence ID" value="BAG12665.1"/>
    <property type="molecule type" value="Genomic_DNA"/>
</dbReference>
<dbReference type="RefSeq" id="YP_063732.1">
    <property type="nucleotide sequence ID" value="NC_002371.2"/>
</dbReference>
<dbReference type="TCDB" id="1.M.1.1.4">
    <property type="family name" value="the rz/rz1 spanin1 (rz(1)) family"/>
</dbReference>
<dbReference type="GeneID" id="2944226"/>
<dbReference type="KEGG" id="vg:2944226"/>
<dbReference type="OrthoDB" id="25097at10239"/>
<dbReference type="Proteomes" id="UP000001315">
    <property type="component" value="Segment"/>
</dbReference>
<dbReference type="Proteomes" id="UP000001795">
    <property type="component" value="Segment"/>
</dbReference>
<dbReference type="Proteomes" id="UP000001796">
    <property type="component" value="Segment"/>
</dbReference>
<dbReference type="Proteomes" id="UP000002165">
    <property type="component" value="Segment"/>
</dbReference>
<dbReference type="GO" id="GO:0020002">
    <property type="term" value="C:host cell plasma membrane"/>
    <property type="evidence" value="ECO:0007669"/>
    <property type="project" value="UniProtKB-SubCell"/>
</dbReference>
<dbReference type="GO" id="GO:0016020">
    <property type="term" value="C:membrane"/>
    <property type="evidence" value="ECO:0007669"/>
    <property type="project" value="UniProtKB-KW"/>
</dbReference>
<dbReference type="GO" id="GO:0044659">
    <property type="term" value="P:viral release from host cell by cytolysis"/>
    <property type="evidence" value="ECO:0007669"/>
    <property type="project" value="InterPro"/>
</dbReference>
<dbReference type="InterPro" id="IPR010346">
    <property type="entry name" value="O-spanin"/>
</dbReference>
<dbReference type="Pfam" id="PF06085">
    <property type="entry name" value="Rz1"/>
    <property type="match status" value="1"/>
</dbReference>
<proteinExistence type="inferred from homology"/>
<feature type="signal peptide" evidence="2">
    <location>
        <begin position="1"/>
        <end position="28"/>
    </location>
</feature>
<feature type="chain" id="PRO_0000429261" description="Probable spanin, outer lipoprotein subunit">
    <location>
        <begin position="29"/>
        <end position="61"/>
    </location>
</feature>
<feature type="topological domain" description="Periplasmic" evidence="2">
    <location>
        <begin position="29"/>
        <end position="61"/>
    </location>
</feature>